<accession>P31858</accession>
<accession>Q9R9L7</accession>
<sequence>MKNVGIKKAALQMSRYVLASKQVQRALKLLGLPASRANEVSGIPKPADTSLSFPGYEAFALHGEAWQAAGEQKPIILMFGVHPWKRDVLARYFSDFRVAYVRTNTSWTKVQTSFCQFTPQAFVFWGMTEIRAAKNYAIKSSIPLWRVEDGFLRSVGLGAQHVLPLSLAVDTTGIYFDPSRPSTLETLISEIGVTENATLIERARRCMSMISAFGLSKYNVGQDVPLKRLPPSDRRRVLVVGQVEDDASIVMGCAARYTNNDIVRITQKENPEAEVIYRPHPDVLGGHRKEFSNPRDVANICTILSGDYDLGSLLDSVDHVYTITSLLGFEALIRRKKVTVFGAPFYSGWGLTDDRQPTPRRTRKPSLDELFAAAYILYPRYCVGSLGSSAEIEHAIMSLALEKNGVPRELAEGVSSALPAEAINVDCVSQTLEGLKSIPS</sequence>
<dbReference type="EMBL" id="M59853">
    <property type="protein sequence ID" value="AAA26297.1"/>
    <property type="molecule type" value="Genomic_DNA"/>
</dbReference>
<dbReference type="EMBL" id="AJ245666">
    <property type="protein sequence ID" value="CAB62159.1"/>
    <property type="molecule type" value="Genomic_DNA"/>
</dbReference>
<dbReference type="PIR" id="A39413">
    <property type="entry name" value="A39413"/>
</dbReference>
<dbReference type="SMR" id="P31858"/>
<dbReference type="GO" id="GO:0005737">
    <property type="term" value="C:cytoplasm"/>
    <property type="evidence" value="ECO:0007669"/>
    <property type="project" value="UniProtKB-SubCell"/>
</dbReference>
<dbReference type="GO" id="GO:0000271">
    <property type="term" value="P:polysaccharide biosynthetic process"/>
    <property type="evidence" value="ECO:0007669"/>
    <property type="project" value="InterPro"/>
</dbReference>
<dbReference type="GO" id="GO:0015774">
    <property type="term" value="P:polysaccharide transport"/>
    <property type="evidence" value="ECO:0007669"/>
    <property type="project" value="InterPro"/>
</dbReference>
<dbReference type="CDD" id="cd16439">
    <property type="entry name" value="beta_Kdo_transferase_KpsC_2"/>
    <property type="match status" value="1"/>
</dbReference>
<dbReference type="InterPro" id="IPR007833">
    <property type="entry name" value="Capsule_polysaccharide_synth"/>
</dbReference>
<dbReference type="Pfam" id="PF05159">
    <property type="entry name" value="Capsule_synth"/>
    <property type="match status" value="1"/>
</dbReference>
<geneLocation type="plasmid">
    <name>megaplasmid pRm41c</name>
</geneLocation>
<feature type="chain" id="PRO_0000084469" description="Lipopolysaccharide-processing protein LpsZ">
    <location>
        <begin position="1"/>
        <end position="440"/>
    </location>
</feature>
<feature type="sequence conflict" description="In Ref. 2; CAB62159." evidence="1" ref="2">
    <original>R</original>
    <variation>A</variation>
    <location>
        <position position="363"/>
    </location>
</feature>
<comment type="function">
    <text>Involved in the invasion of nitrogen fixation nodules. May be involved in the biosynthesis of lipopolysaccharides as an enzyme or a regulatory protein.</text>
</comment>
<comment type="subcellular location">
    <subcellularLocation>
        <location>Cytoplasm</location>
    </subcellularLocation>
</comment>
<comment type="similarity">
    <text evidence="1">To E.coli capsule polysaccharide export protein KpsC.</text>
</comment>
<comment type="caution">
    <text evidence="1">It is uncertain whether Met-1 or Met-13 is the initiator.</text>
</comment>
<gene>
    <name type="primary">lpsZ</name>
    <name type="synonym">rkpZ</name>
</gene>
<keyword id="KW-0963">Cytoplasm</keyword>
<keyword id="KW-0614">Plasmid</keyword>
<proteinExistence type="predicted"/>
<evidence type="ECO:0000305" key="1"/>
<organism>
    <name type="scientific">Rhizobium meliloti</name>
    <name type="common">Ensifer meliloti</name>
    <name type="synonym">Sinorhizobium meliloti</name>
    <dbReference type="NCBI Taxonomy" id="382"/>
    <lineage>
        <taxon>Bacteria</taxon>
        <taxon>Pseudomonadati</taxon>
        <taxon>Pseudomonadota</taxon>
        <taxon>Alphaproteobacteria</taxon>
        <taxon>Hyphomicrobiales</taxon>
        <taxon>Rhizobiaceae</taxon>
        <taxon>Sinorhizobium/Ensifer group</taxon>
        <taxon>Sinorhizobium</taxon>
    </lineage>
</organism>
<name>LPSZ_RHIML</name>
<protein>
    <recommendedName>
        <fullName>Lipopolysaccharide-processing protein LpsZ</fullName>
    </recommendedName>
    <alternativeName>
        <fullName>Polysaccharide chain length determinant protein</fullName>
    </alternativeName>
</protein>
<reference key="1">
    <citation type="journal article" date="1991" name="J. Bacteriol.">
        <title>lpsZ, a lipopolysaccharide gene involved in symbiosis of Rhizobium meliloti.</title>
        <authorList>
            <person name="Brzoska P.M."/>
            <person name="Signer E.R."/>
        </authorList>
    </citation>
    <scope>NUCLEOTIDE SEQUENCE [GENOMIC DNA]</scope>
    <source>
        <strain>41</strain>
    </source>
</reference>
<reference key="2">
    <citation type="submission" date="1999-08" db="EMBL/GenBank/DDBJ databases">
        <title>Analysis of the rkp-3 gene cluster involved in capsular polysaccharide production in Rhizobium meliloti.</title>
        <authorList>
            <person name="Kiss E."/>
            <person name="Kereszt A."/>
            <person name="Putnoky P."/>
        </authorList>
    </citation>
    <scope>NUCLEOTIDE SEQUENCE [GENOMIC DNA]</scope>
    <source>
        <strain>41</strain>
    </source>
</reference>